<sequence>MLKIIDAKVIVTCPGRNFVTLKITTEDGITGVGDATLNGRELSVVSFLQDHMVPSLIGRDAHQIEDIWQFFYRGSYWRGGPVAMTALAAVDMALWDIKGKVAGLPVYQLLGGACRTGVTVYGHANGETIEDTIAEAVKYKAMGYKAIRLQTGVPGLASTYGVSKDKMFYEPADNDLPTENIWSTAKYLNSVPKLFERAREVLGWDVHLLHDVHHRLTPIEAARLGKDLEPYRLFWLEDSVPAENQAGFRLIRQHTTTPLAVGEIFAHVWDAKQLIEEQLIDYLRATVLHAGGITNLKKIAAFADLHHVKTGCHGATDLSPVTMAAALHFDMSITNFGLQEYMRHTPETDAVFPHAYTFSDGMLHPGDKPGLGVDIDEDLAAKHPYKRAYLPVNRLEDGTMFNW</sequence>
<accession>Q9AAR4</accession>
<feature type="chain" id="PRO_0000429879" description="D-mannonate dehydratase CC0532">
    <location>
        <begin position="1"/>
        <end position="403"/>
    </location>
</feature>
<feature type="active site" description="Proton donor/acceptor" evidence="1">
    <location>
        <position position="160"/>
    </location>
</feature>
<feature type="active site" description="Proton donor/acceptor" evidence="1">
    <location>
        <position position="213"/>
    </location>
</feature>
<feature type="binding site">
    <location>
        <position position="38"/>
    </location>
    <ligand>
        <name>substrate</name>
    </ligand>
</feature>
<feature type="binding site" evidence="1">
    <location>
        <position position="123"/>
    </location>
    <ligand>
        <name>substrate</name>
    </ligand>
</feature>
<feature type="binding site" evidence="2">
    <location>
        <position position="211"/>
    </location>
    <ligand>
        <name>Mg(2+)</name>
        <dbReference type="ChEBI" id="CHEBI:18420"/>
    </ligand>
</feature>
<feature type="binding site" evidence="2">
    <location>
        <position position="237"/>
    </location>
    <ligand>
        <name>Mg(2+)</name>
        <dbReference type="ChEBI" id="CHEBI:18420"/>
    </ligand>
</feature>
<feature type="binding site" evidence="2">
    <location>
        <position position="263"/>
    </location>
    <ligand>
        <name>Mg(2+)</name>
        <dbReference type="ChEBI" id="CHEBI:18420"/>
    </ligand>
</feature>
<feature type="binding site">
    <location>
        <position position="263"/>
    </location>
    <ligand>
        <name>substrate</name>
    </ligand>
</feature>
<feature type="binding site">
    <location>
        <position position="284"/>
    </location>
    <ligand>
        <name>substrate</name>
    </ligand>
</feature>
<feature type="binding site">
    <location>
        <position position="313"/>
    </location>
    <ligand>
        <name>substrate</name>
    </ligand>
</feature>
<feature type="binding site">
    <location>
        <position position="317"/>
    </location>
    <ligand>
        <name>substrate</name>
    </ligand>
</feature>
<feature type="binding site">
    <location>
        <position position="340"/>
    </location>
    <ligand>
        <name>substrate</name>
    </ligand>
</feature>
<feature type="site" description="Important for activity and substrate specificity; Ala is observed in family members with high D-mannonate dehydratase activity that have no activity with D-gluconate" evidence="1">
    <location>
        <position position="315"/>
    </location>
</feature>
<feature type="strand" evidence="4">
    <location>
        <begin position="3"/>
        <end position="12"/>
    </location>
</feature>
<feature type="strand" evidence="4">
    <location>
        <begin position="14"/>
        <end position="16"/>
    </location>
</feature>
<feature type="strand" evidence="4">
    <location>
        <begin position="18"/>
        <end position="25"/>
    </location>
</feature>
<feature type="strand" evidence="4">
    <location>
        <begin position="30"/>
        <end position="34"/>
    </location>
</feature>
<feature type="helix" evidence="4">
    <location>
        <begin position="41"/>
        <end position="50"/>
    </location>
</feature>
<feature type="helix" evidence="4">
    <location>
        <begin position="53"/>
        <end position="56"/>
    </location>
</feature>
<feature type="helix" evidence="4">
    <location>
        <begin position="64"/>
        <end position="74"/>
    </location>
</feature>
<feature type="helix" evidence="4">
    <location>
        <begin position="81"/>
        <end position="102"/>
    </location>
</feature>
<feature type="helix" evidence="4">
    <location>
        <begin position="106"/>
        <end position="109"/>
    </location>
</feature>
<feature type="strand" evidence="4">
    <location>
        <begin position="114"/>
        <end position="128"/>
    </location>
</feature>
<feature type="helix" evidence="4">
    <location>
        <begin position="129"/>
        <end position="141"/>
    </location>
</feature>
<feature type="strand" evidence="4">
    <location>
        <begin position="145"/>
        <end position="151"/>
    </location>
</feature>
<feature type="strand" evidence="4">
    <location>
        <begin position="174"/>
        <end position="176"/>
    </location>
</feature>
<feature type="strand" evidence="4">
    <location>
        <begin position="179"/>
        <end position="182"/>
    </location>
</feature>
<feature type="helix" evidence="4">
    <location>
        <begin position="184"/>
        <end position="188"/>
    </location>
</feature>
<feature type="helix" evidence="4">
    <location>
        <begin position="191"/>
        <end position="202"/>
    </location>
</feature>
<feature type="strand" evidence="4">
    <location>
        <begin position="204"/>
        <end position="211"/>
    </location>
</feature>
<feature type="helix" evidence="4">
    <location>
        <begin position="218"/>
        <end position="228"/>
    </location>
</feature>
<feature type="helix" evidence="4">
    <location>
        <begin position="229"/>
        <end position="231"/>
    </location>
</feature>
<feature type="strand" evidence="4">
    <location>
        <begin position="234"/>
        <end position="237"/>
    </location>
</feature>
<feature type="helix" evidence="4">
    <location>
        <begin position="247"/>
        <end position="254"/>
    </location>
</feature>
<feature type="strand" evidence="4">
    <location>
        <begin position="259"/>
        <end position="261"/>
    </location>
</feature>
<feature type="helix" evidence="4">
    <location>
        <begin position="268"/>
        <end position="270"/>
    </location>
</feature>
<feature type="helix" evidence="4">
    <location>
        <begin position="272"/>
        <end position="276"/>
    </location>
</feature>
<feature type="strand" evidence="4">
    <location>
        <begin position="281"/>
        <end position="283"/>
    </location>
</feature>
<feature type="turn" evidence="4">
    <location>
        <begin position="287"/>
        <end position="291"/>
    </location>
</feature>
<feature type="helix" evidence="4">
    <location>
        <begin position="292"/>
        <end position="303"/>
    </location>
</feature>
<feature type="helix" evidence="4">
    <location>
        <begin position="304"/>
        <end position="306"/>
    </location>
</feature>
<feature type="strand" evidence="5">
    <location>
        <begin position="309"/>
        <end position="312"/>
    </location>
</feature>
<feature type="helix" evidence="4">
    <location>
        <begin position="320"/>
        <end position="331"/>
    </location>
</feature>
<feature type="strand" evidence="5">
    <location>
        <begin position="334"/>
        <end position="340"/>
    </location>
</feature>
<feature type="helix" evidence="4">
    <location>
        <begin position="346"/>
        <end position="351"/>
    </location>
</feature>
<feature type="strand" evidence="4">
    <location>
        <begin position="357"/>
        <end position="359"/>
    </location>
</feature>
<feature type="strand" evidence="4">
    <location>
        <begin position="362"/>
        <end position="364"/>
    </location>
</feature>
<feature type="strand" evidence="4">
    <location>
        <begin position="367"/>
        <end position="370"/>
    </location>
</feature>
<feature type="helix" evidence="4">
    <location>
        <begin position="377"/>
        <end position="380"/>
    </location>
</feature>
<feature type="strand" evidence="4">
    <location>
        <begin position="392"/>
        <end position="395"/>
    </location>
</feature>
<reference key="1">
    <citation type="journal article" date="2001" name="Proc. Natl. Acad. Sci. U.S.A.">
        <title>Complete genome sequence of Caulobacter crescentus.</title>
        <authorList>
            <person name="Nierman W.C."/>
            <person name="Feldblyum T.V."/>
            <person name="Laub M.T."/>
            <person name="Paulsen I.T."/>
            <person name="Nelson K.E."/>
            <person name="Eisen J.A."/>
            <person name="Heidelberg J.F."/>
            <person name="Alley M.R.K."/>
            <person name="Ohta N."/>
            <person name="Maddock J.R."/>
            <person name="Potocka I."/>
            <person name="Nelson W.C."/>
            <person name="Newton A."/>
            <person name="Stephens C."/>
            <person name="Phadke N.D."/>
            <person name="Ely B."/>
            <person name="DeBoy R.T."/>
            <person name="Dodson R.J."/>
            <person name="Durkin A.S."/>
            <person name="Gwinn M.L."/>
            <person name="Haft D.H."/>
            <person name="Kolonay J.F."/>
            <person name="Smit J."/>
            <person name="Craven M.B."/>
            <person name="Khouri H.M."/>
            <person name="Shetty J."/>
            <person name="Berry K.J."/>
            <person name="Utterback T.R."/>
            <person name="Tran K."/>
            <person name="Wolf A.M."/>
            <person name="Vamathevan J.J."/>
            <person name="Ermolaeva M.D."/>
            <person name="White O."/>
            <person name="Salzberg S.L."/>
            <person name="Venter J.C."/>
            <person name="Shapiro L."/>
            <person name="Fraser C.M."/>
        </authorList>
    </citation>
    <scope>NUCLEOTIDE SEQUENCE [LARGE SCALE GENOMIC DNA]</scope>
    <source>
        <strain>ATCC 19089 / CIP 103742 / CB 15</strain>
    </source>
</reference>
<reference key="2">
    <citation type="journal article" date="2014" name="Biochemistry">
        <title>Discovery of function in the enolase superfamily: D-mannonate and D-gluconate dehydratases in the D-mannonate dehydratase subgroup.</title>
        <authorList>
            <person name="Wichelecki D.J."/>
            <person name="Balthazor B.M."/>
            <person name="Chau A.C."/>
            <person name="Vetting M.W."/>
            <person name="Fedorov A.A."/>
            <person name="Fedorov E.V."/>
            <person name="Lukk T."/>
            <person name="Patskovsky Y.V."/>
            <person name="Stead M.B."/>
            <person name="Hillerich B.S."/>
            <person name="Seidel R.D."/>
            <person name="Almo S.C."/>
            <person name="Gerlt J.A."/>
        </authorList>
    </citation>
    <scope>X-RAY CRYSTALLOGRAPHY (1.45 ANGSTROMS) IN COMPLEX WITH MAGNESIUM AND D-MANNONATE</scope>
    <scope>FUNCTION</scope>
    <scope>CATALYTIC ACTIVITY</scope>
    <scope>COFACTOR</scope>
    <scope>BIOPHYSICOCHEMICAL PROPERTIES</scope>
    <source>
        <strain>ATCC 19089 / CIP 103742 / CB 15</strain>
    </source>
</reference>
<evidence type="ECO:0000250" key="1"/>
<evidence type="ECO:0000269" key="2">
    <source>
    </source>
</evidence>
<evidence type="ECO:0000305" key="3"/>
<evidence type="ECO:0007829" key="4">
    <source>
        <dbReference type="PDB" id="3VCN"/>
    </source>
</evidence>
<evidence type="ECO:0007829" key="5">
    <source>
        <dbReference type="PDB" id="4GME"/>
    </source>
</evidence>
<keyword id="KW-0002">3D-structure</keyword>
<keyword id="KW-0119">Carbohydrate metabolism</keyword>
<keyword id="KW-0456">Lyase</keyword>
<keyword id="KW-0460">Magnesium</keyword>
<keyword id="KW-0479">Metal-binding</keyword>
<keyword id="KW-1185">Reference proteome</keyword>
<comment type="function">
    <text evidence="2">Catalyzes the dehydration of D-mannonate. Has no detectable activity with a panel of 70 other acid sugars (in vitro).</text>
</comment>
<comment type="catalytic activity">
    <reaction evidence="2">
        <text>D-mannonate = 2-dehydro-3-deoxy-D-gluconate + H2O</text>
        <dbReference type="Rhea" id="RHEA:20097"/>
        <dbReference type="ChEBI" id="CHEBI:15377"/>
        <dbReference type="ChEBI" id="CHEBI:17767"/>
        <dbReference type="ChEBI" id="CHEBI:57990"/>
        <dbReference type="EC" id="4.2.1.8"/>
    </reaction>
</comment>
<comment type="cofactor">
    <cofactor evidence="2">
        <name>Mg(2+)</name>
        <dbReference type="ChEBI" id="CHEBI:18420"/>
    </cofactor>
    <text evidence="2">Binds 1 Mg(2+) ion per subunit.</text>
</comment>
<comment type="biophysicochemical properties">
    <kinetics>
        <text evidence="2">kcat is 1.0 sec(-1) with D-mannonate.</text>
    </kinetics>
</comment>
<comment type="pathway">
    <text>Carbohydrate metabolism; pentose and glucuronate interconversion.</text>
</comment>
<comment type="similarity">
    <text evidence="3">Belongs to the mandelate racemase/muconate lactonizing enzyme family. GalD subfamily.</text>
</comment>
<name>MAND2_CAUVC</name>
<dbReference type="EC" id="4.2.1.8"/>
<dbReference type="EMBL" id="AE005673">
    <property type="protein sequence ID" value="AAK22519.1"/>
    <property type="molecule type" value="Genomic_DNA"/>
</dbReference>
<dbReference type="PIR" id="C87315">
    <property type="entry name" value="C87315"/>
</dbReference>
<dbReference type="RefSeq" id="NP_419351.1">
    <property type="nucleotide sequence ID" value="NC_002696.2"/>
</dbReference>
<dbReference type="RefSeq" id="WP_010918420.1">
    <property type="nucleotide sequence ID" value="NC_002696.2"/>
</dbReference>
<dbReference type="PDB" id="3VCN">
    <property type="method" value="X-ray"/>
    <property type="resolution" value="1.45 A"/>
    <property type="chains" value="A/C=1-403"/>
</dbReference>
<dbReference type="PDB" id="4GME">
    <property type="method" value="X-ray"/>
    <property type="resolution" value="2.00 A"/>
    <property type="chains" value="A/C=1-403"/>
</dbReference>
<dbReference type="PDBsum" id="3VCN"/>
<dbReference type="PDBsum" id="4GME"/>
<dbReference type="SMR" id="Q9AAR4"/>
<dbReference type="STRING" id="190650.CC_0532"/>
<dbReference type="EnsemblBacteria" id="AAK22519">
    <property type="protein sequence ID" value="AAK22519"/>
    <property type="gene ID" value="CC_0532"/>
</dbReference>
<dbReference type="KEGG" id="ccr:CC_0532"/>
<dbReference type="PATRIC" id="fig|190650.5.peg.542"/>
<dbReference type="eggNOG" id="COG4948">
    <property type="taxonomic scope" value="Bacteria"/>
</dbReference>
<dbReference type="HOGENOM" id="CLU_030273_6_1_5"/>
<dbReference type="BioCyc" id="CAULO:CC0532-MONOMER"/>
<dbReference type="UniPathway" id="UPA00246"/>
<dbReference type="EvolutionaryTrace" id="Q9AAR4"/>
<dbReference type="Proteomes" id="UP000001816">
    <property type="component" value="Chromosome"/>
</dbReference>
<dbReference type="GO" id="GO:0000287">
    <property type="term" value="F:magnesium ion binding"/>
    <property type="evidence" value="ECO:0000314"/>
    <property type="project" value="UniProtKB"/>
</dbReference>
<dbReference type="GO" id="GO:0008927">
    <property type="term" value="F:mannonate dehydratase activity"/>
    <property type="evidence" value="ECO:0000314"/>
    <property type="project" value="CACAO"/>
</dbReference>
<dbReference type="GO" id="GO:0009063">
    <property type="term" value="P:amino acid catabolic process"/>
    <property type="evidence" value="ECO:0007669"/>
    <property type="project" value="InterPro"/>
</dbReference>
<dbReference type="GO" id="GO:0016052">
    <property type="term" value="P:carbohydrate catabolic process"/>
    <property type="evidence" value="ECO:0000314"/>
    <property type="project" value="UniProtKB"/>
</dbReference>
<dbReference type="FunFam" id="3.20.20.120:FF:000004">
    <property type="entry name" value="D-galactonate dehydratase family protein"/>
    <property type="match status" value="1"/>
</dbReference>
<dbReference type="Gene3D" id="3.20.20.120">
    <property type="entry name" value="Enolase-like C-terminal domain"/>
    <property type="match status" value="1"/>
</dbReference>
<dbReference type="Gene3D" id="3.30.390.10">
    <property type="entry name" value="Enolase-like, N-terminal domain"/>
    <property type="match status" value="1"/>
</dbReference>
<dbReference type="InterPro" id="IPR053379">
    <property type="entry name" value="D-mannonate_dehydratase_GalD"/>
</dbReference>
<dbReference type="InterPro" id="IPR034593">
    <property type="entry name" value="DgoD-like"/>
</dbReference>
<dbReference type="InterPro" id="IPR036849">
    <property type="entry name" value="Enolase-like_C_sf"/>
</dbReference>
<dbReference type="InterPro" id="IPR029017">
    <property type="entry name" value="Enolase-like_N"/>
</dbReference>
<dbReference type="InterPro" id="IPR029065">
    <property type="entry name" value="Enolase_C-like"/>
</dbReference>
<dbReference type="InterPro" id="IPR034587">
    <property type="entry name" value="MAND"/>
</dbReference>
<dbReference type="InterPro" id="IPR018110">
    <property type="entry name" value="Mandel_Rmase/mucon_lact_enz_CS"/>
</dbReference>
<dbReference type="InterPro" id="IPR013342">
    <property type="entry name" value="Mandelate_racemase_C"/>
</dbReference>
<dbReference type="InterPro" id="IPR013341">
    <property type="entry name" value="Mandelate_racemase_N_dom"/>
</dbReference>
<dbReference type="NCBIfam" id="NF043051">
    <property type="entry name" value="ManoateDhtManD"/>
    <property type="match status" value="1"/>
</dbReference>
<dbReference type="NCBIfam" id="NF011654">
    <property type="entry name" value="PRK15072.1"/>
    <property type="match status" value="1"/>
</dbReference>
<dbReference type="PANTHER" id="PTHR48080">
    <property type="entry name" value="D-GALACTONATE DEHYDRATASE-RELATED"/>
    <property type="match status" value="1"/>
</dbReference>
<dbReference type="PANTHER" id="PTHR48080:SF6">
    <property type="entry name" value="STARVATION-SENSING PROTEIN RSPA"/>
    <property type="match status" value="1"/>
</dbReference>
<dbReference type="Pfam" id="PF13378">
    <property type="entry name" value="MR_MLE_C"/>
    <property type="match status" value="1"/>
</dbReference>
<dbReference type="Pfam" id="PF02746">
    <property type="entry name" value="MR_MLE_N"/>
    <property type="match status" value="1"/>
</dbReference>
<dbReference type="SFLD" id="SFLDS00001">
    <property type="entry name" value="Enolase"/>
    <property type="match status" value="1"/>
</dbReference>
<dbReference type="SFLD" id="SFLDF00001">
    <property type="entry name" value="mannonate_dehydratase"/>
    <property type="match status" value="1"/>
</dbReference>
<dbReference type="SMART" id="SM00922">
    <property type="entry name" value="MR_MLE"/>
    <property type="match status" value="1"/>
</dbReference>
<dbReference type="SUPFAM" id="SSF51604">
    <property type="entry name" value="Enolase C-terminal domain-like"/>
    <property type="match status" value="1"/>
</dbReference>
<dbReference type="SUPFAM" id="SSF54826">
    <property type="entry name" value="Enolase N-terminal domain-like"/>
    <property type="match status" value="1"/>
</dbReference>
<dbReference type="PROSITE" id="PS00908">
    <property type="entry name" value="MR_MLE_1"/>
    <property type="match status" value="1"/>
</dbReference>
<protein>
    <recommendedName>
        <fullName>D-mannonate dehydratase CC0532</fullName>
        <shortName>ManD</shortName>
        <ecNumber>4.2.1.8</ecNumber>
    </recommendedName>
</protein>
<proteinExistence type="evidence at protein level"/>
<organism>
    <name type="scientific">Caulobacter vibrioides (strain ATCC 19089 / CIP 103742 / CB 15)</name>
    <name type="common">Caulobacter crescentus</name>
    <dbReference type="NCBI Taxonomy" id="190650"/>
    <lineage>
        <taxon>Bacteria</taxon>
        <taxon>Pseudomonadati</taxon>
        <taxon>Pseudomonadota</taxon>
        <taxon>Alphaproteobacteria</taxon>
        <taxon>Caulobacterales</taxon>
        <taxon>Caulobacteraceae</taxon>
        <taxon>Caulobacter</taxon>
    </lineage>
</organism>
<gene>
    <name type="ordered locus">CC_0532</name>
</gene>